<comment type="function">
    <text evidence="2 7">Ligand-activated transcription factor that enables cells to adapt to changing conditions by sensing compounds from the environment, diet, microbiome and cellular metabolism, and which plays important roles in development, immunity and cancer (PubMed:7812217). Upon ligand binding, translocates into the nucleus, where it heterodimerizes with ARNT and induces transcription by binding to xenobiotic response elements (XRE). Regulates a variety of biological processes, including angiogenesis, hematopoiesis, drug and lipid metabolism, cell motility and immune modulation. Xenobiotics can act as ligands: upon xenobiotic-binding, activates the expression of multiple phase I and II xenobiotic chemical metabolizing enzyme genes (such as the CYP1A1 gene). Mediates biochemical and toxic effects of halogenated aromatic hydrocarbons. Next to xenobiotics, natural ligands derived from plants, microbiota, and endogenous metabolism are potent AHR agonists. Tryptophan (Trp) derivatives constitute an important class of endogenous AHR ligands. Acts as a negative regulator of anti-tumor immunity: indoles and kynurenic acid generated by Trp catabolism act as ligand and activate AHR, thereby promoting AHR-driven cancer cell motility and suppressing adaptive immunity. Regulates the circadian clock by inhibiting the basal and circadian expression of the core circadian component PER1. Inhibits PER1 by repressing the CLOCK-BMAL1 heterodimer mediated transcriptional activation of PER1. The heterodimer ARNT:AHR binds to core DNA sequence 5'-TGCGTG-3' within the dioxin response element (DRE) of target gene promoters and activates their transcription (By similarity).</text>
</comment>
<comment type="subunit">
    <text evidence="1 2">Homodimer (By similarity). Heterodimer; efficient DNA binding requires dimerization with another bHLH protein. Interacts with ARNT; the heterodimer ARNT:AHR binds to core DNA sequence 5'-TGCGTG-3' within the dioxin response element (DRE) of target gene promoters and activates their transcription (By similarity). Binds MYBBP1A (By similarity). Interacts with coactivators including SRC-1, RIP140 and NOCA7, and with the corepressor SMRT. Interacts with NEDD8 and IVNS1ABP (By similarity). Interacts with BMAL1. Interacts with HSP90AB1 (By similarity). Interacts with TIPARP; leading to mono-ADP-ribosylation of AHR and subsequent inhibition of AHR (By similarity).</text>
</comment>
<comment type="interaction">
    <interactant intactId="EBI-1162880">
        <id>P41738</id>
    </interactant>
    <interactant intactId="EBI-1162920">
        <id>P41739</id>
        <label>Arnt</label>
    </interactant>
    <organismsDiffer>false</organismsDiffer>
    <experiments>2</experiments>
</comment>
<comment type="subcellular location">
    <subcellularLocation>
        <location evidence="1">Cytoplasm</location>
    </subcellularLocation>
    <subcellularLocation>
        <location evidence="1">Nucleus</location>
    </subcellularLocation>
    <text evidence="1">Initially cytoplasmic; upon binding with ligand and interaction with a HSP90, it translocates to the nucleus.</text>
</comment>
<comment type="alternative products">
    <event type="alternative splicing"/>
    <isoform>
        <id>P41738-1</id>
        <name>1</name>
        <name>Long</name>
        <sequence type="displayed"/>
    </isoform>
    <isoform>
        <id>P41738-2</id>
        <name>2</name>
        <name>Short</name>
        <sequence type="described" ref="VSP_002091"/>
    </isoform>
</comment>
<comment type="tissue specificity">
    <text evidence="7 8">Expressed in all tissues tested including brain, heart, kidney, liver, lung, spleen, skeletal muscle and thymus.</text>
</comment>
<comment type="induction">
    <text evidence="6">Induced or repressed by TGF-beta in a cell-specific fashion. Repressed by dioxin, retinoic acid, and TPA.</text>
</comment>
<comment type="domain">
    <text evidence="1">The PAS 1 domain is essential for dimerization and also required for AHR:ARNT heterodimerization.</text>
</comment>
<comment type="PTM">
    <text evidence="2">Mono-ADP-ribosylated, leading to inhibit transcription activator activity of AHR.</text>
</comment>
<accession>P41738</accession>
<accession>O88930</accession>
<accession>O89105</accession>
<evidence type="ECO:0000250" key="1">
    <source>
        <dbReference type="UniProtKB" id="P30561"/>
    </source>
</evidence>
<evidence type="ECO:0000250" key="2">
    <source>
        <dbReference type="UniProtKB" id="P35869"/>
    </source>
</evidence>
<evidence type="ECO:0000255" key="3">
    <source>
        <dbReference type="PROSITE-ProRule" id="PRU00140"/>
    </source>
</evidence>
<evidence type="ECO:0000255" key="4">
    <source>
        <dbReference type="PROSITE-ProRule" id="PRU00981"/>
    </source>
</evidence>
<evidence type="ECO:0000256" key="5">
    <source>
        <dbReference type="SAM" id="MobiDB-lite"/>
    </source>
</evidence>
<evidence type="ECO:0000269" key="6">
    <source>
    </source>
</evidence>
<evidence type="ECO:0000269" key="7">
    <source>
    </source>
</evidence>
<evidence type="ECO:0000269" key="8">
    <source>
    </source>
</evidence>
<evidence type="ECO:0000269" key="9">
    <source>
    </source>
</evidence>
<evidence type="ECO:0000303" key="10">
    <source>
    </source>
</evidence>
<evidence type="ECO:0000305" key="11"/>
<organism>
    <name type="scientific">Rattus norvegicus</name>
    <name type="common">Rat</name>
    <dbReference type="NCBI Taxonomy" id="10116"/>
    <lineage>
        <taxon>Eukaryota</taxon>
        <taxon>Metazoa</taxon>
        <taxon>Chordata</taxon>
        <taxon>Craniata</taxon>
        <taxon>Vertebrata</taxon>
        <taxon>Euteleostomi</taxon>
        <taxon>Mammalia</taxon>
        <taxon>Eutheria</taxon>
        <taxon>Euarchontoglires</taxon>
        <taxon>Glires</taxon>
        <taxon>Rodentia</taxon>
        <taxon>Myomorpha</taxon>
        <taxon>Muroidea</taxon>
        <taxon>Muridae</taxon>
        <taxon>Murinae</taxon>
        <taxon>Rattus</taxon>
    </lineage>
</organism>
<keyword id="KW-0010">Activator</keyword>
<keyword id="KW-0013">ADP-ribosylation</keyword>
<keyword id="KW-0025">Alternative splicing</keyword>
<keyword id="KW-0090">Biological rhythms</keyword>
<keyword id="KW-0131">Cell cycle</keyword>
<keyword id="KW-0963">Cytoplasm</keyword>
<keyword id="KW-0903">Direct protein sequencing</keyword>
<keyword id="KW-0238">DNA-binding</keyword>
<keyword id="KW-0539">Nucleus</keyword>
<keyword id="KW-0675">Receptor</keyword>
<keyword id="KW-1185">Reference proteome</keyword>
<keyword id="KW-0677">Repeat</keyword>
<keyword id="KW-0678">Repressor</keyword>
<keyword id="KW-0804">Transcription</keyword>
<keyword id="KW-0805">Transcription regulation</keyword>
<sequence>MSSGANITYASRKRRKPVQKTVKPVPAEGIKSNPSKRHRDRLNTELDRLASLLPFPQDVINKLDKLSVLRLSVSYLRAKSFFDVALKSTPADRSRGQDQCRAQVRDWQDLQEGEFLLQALNGFVLVVTADALVFYASSTIQDYLGFQQSDVIHQSVYELIHTEDRAEFQRQLHWALNPSQCTDSAQGVDETHGLPQPAVYYTPDQLPPENTAFMERCFRCRLRCLLDNSSGFLAMNFQGRLKYLHGQNKKGKDGALLPPQLALFAIATPLQPPSILEIRTKNFIFRTKHKLDFTPIGCDAKGQLILGYTEVELCNKGSGYQFIHAADMLHCAESHIRMIKTGESGMTVFRLLAKHSRWRWVQSNARLIYRNGRPDYIIATQRPLTDEEGREHLQKRSMTLPFMFATGEAVLYEISSPFSPIMDPLPIRTKSNTSRKDWAPQSTPSKDSFHPNSLMSALIQQDESIYLCPPSSPAPLDSHFLMDSMSECGSWQGSFAVASNEALLKHEEIRHTQDVNLTLSGGPSELFPDNKNNDLYSIMRNLGIDFEDIRSMQNEEFFRTDSSGEVDFKDIDITDEILTYVQDSLNNSTLLNSACQQQPVSQHLSCMLQERLQLEQQQQLQQQHPTQTLEPQRQLCQVEVPQHELGQKTKHMQVNGMFASWNPAPPVSFSCPQQERKHYSLFSGLQGTAQEFPYKSEVDSMPYTQNFAPCNQSLLPEHSKGTQLDFPGRDFERSLHPNASNLEDFVSCLQVPENQRHGINSQSAMVSPQAYYAGAMSMYQCQAGPQHTPVDQMQYSPEIPGSQAFLSKFQSPSILNEAYSADLSSIGHLQTAAHLPRLAEAQPLPDITPSGFL</sequence>
<protein>
    <recommendedName>
        <fullName>Aryl hydrocarbon receptor</fullName>
        <shortName>Ah receptor</shortName>
        <shortName>AhR</shortName>
    </recommendedName>
</protein>
<gene>
    <name type="primary">Ahr</name>
</gene>
<proteinExistence type="evidence at protein level"/>
<reference key="1">
    <citation type="journal article" date="1994" name="Nucleic Acids Res.">
        <title>Tissue specific expression of the rat Ah-receptor and ARNT mRNAs.</title>
        <authorList>
            <person name="Carver L.A."/>
            <person name="Hogenesch J.B."/>
            <person name="Bradfield C.A."/>
        </authorList>
    </citation>
    <scope>NUCLEOTIDE SEQUENCE [MRNA] (ISOFORMS 1 AND 2)</scope>
    <scope>TISSUE SPECIFICITY</scope>
    <source>
        <strain>Fischer 344</strain>
        <strain>Sprague-Dawley</strain>
        <tissue>Liver</tissue>
        <tissue>Placenta</tissue>
    </source>
</reference>
<reference key="2">
    <citation type="journal article" date="1994" name="Receptor">
        <title>Dioxin-dependent, DNA sequence-specific binding of a multiprotein complex containing the Ah receptor.</title>
        <authorList>
            <person name="Elferink C.J."/>
            <person name="Whitlock J.P. Jr."/>
        </authorList>
    </citation>
    <scope>NUCLEOTIDE SEQUENCE [MRNA] (ISOFORM 1)</scope>
    <scope>PROTEIN SEQUENCE OF 236-251 AND 702-708</scope>
    <scope>FUNCTION</scope>
    <scope>TISSUE SPECIFICITY</scope>
    <source>
        <strain>Sprague-Dawley</strain>
        <tissue>Liver</tissue>
    </source>
</reference>
<reference key="3">
    <citation type="journal article" date="1998" name="Mol. Pharmacol.">
        <title>Point mutation in intron sequence causes altered carboxyl-terminal structure in the aryl hydrocarbon receptor of the most 2,3,7,8-tetrachlorodibenzo-p-dioxin-resistant rat strain.</title>
        <authorList>
            <person name="Pohjanvirta R."/>
            <person name="Wong J.M.Y."/>
            <person name="Li W."/>
            <person name="Harper P.A."/>
            <person name="Tuomisto J."/>
            <person name="Okey A.B."/>
        </authorList>
    </citation>
    <scope>NUCLEOTIDE SEQUENCE [MRNA] (ISOFORM 1)</scope>
    <scope>VARIANT ALA-497</scope>
    <source>
        <strain>Han/Wistar</strain>
        <strain>Long Evans</strain>
        <strain>Sprague-Dawley</strain>
    </source>
</reference>
<reference key="4">
    <citation type="journal article" date="2001" name="Biochem. Pharmacol.">
        <title>In vivo up-regulation of aryl hydrocarbon receptor expression by 2,3,7,8-tetrachlorodibenzo-p-dioxin (TCDD) in a dioxin-resistant rat model.</title>
        <authorList>
            <person name="Franc M.A."/>
            <person name="Pohjanvirta R."/>
            <person name="Tuomisto J."/>
            <person name="Okey A.B."/>
        </authorList>
    </citation>
    <scope>INDUCTION</scope>
</reference>
<reference key="5">
    <citation type="journal article" date="2002" name="Chem. Biol. Interact.">
        <title>Role of the aryl hydrocarbon receptor in cell cycle regulation.</title>
        <authorList>
            <person name="Puga A."/>
            <person name="Xia Y."/>
            <person name="Elferink C."/>
        </authorList>
    </citation>
    <scope>REVIEW ON ROLE IN CELL CYCLE</scope>
</reference>
<name>AHR_RAT</name>
<feature type="propeptide" id="PRO_0000013464" evidence="1">
    <location>
        <begin position="1"/>
        <end position="9"/>
    </location>
</feature>
<feature type="chain" id="PRO_0000013465" description="Aryl hydrocarbon receptor">
    <location>
        <begin position="10"/>
        <end position="853"/>
    </location>
</feature>
<feature type="domain" description="bHLH" evidence="4">
    <location>
        <begin position="26"/>
        <end position="79"/>
    </location>
</feature>
<feature type="domain" description="PAS 1" evidence="3">
    <location>
        <begin position="116"/>
        <end position="179"/>
    </location>
</feature>
<feature type="domain" description="PAS 2" evidence="3">
    <location>
        <begin position="273"/>
        <end position="340"/>
    </location>
</feature>
<feature type="domain" description="PAC">
    <location>
        <begin position="346"/>
        <end position="384"/>
    </location>
</feature>
<feature type="region of interest" description="Disordered" evidence="5">
    <location>
        <begin position="1"/>
        <end position="38"/>
    </location>
</feature>
<feature type="region of interest" description="DNA-binding" evidence="2">
    <location>
        <begin position="37"/>
        <end position="65"/>
    </location>
</feature>
<feature type="region of interest" description="Required for maintaining the overall integrity of the AHR:ARNT heterodimer and its transcriptional activity" evidence="2">
    <location>
        <begin position="49"/>
        <end position="81"/>
    </location>
</feature>
<feature type="region of interest" description="Required for maintaining the overall integrity of the AHR:ARNT heterodimer and its transcriptional activity" evidence="1">
    <location>
        <begin position="116"/>
        <end position="124"/>
    </location>
</feature>
<feature type="region of interest" description="Required for maintaining the overall integrity of the AHR:ARNT heterodimer and its transcriptional activity" evidence="1">
    <location>
        <begin position="264"/>
        <end position="266"/>
    </location>
</feature>
<feature type="region of interest" description="Disordered" evidence="5">
    <location>
        <begin position="429"/>
        <end position="451"/>
    </location>
</feature>
<feature type="short sequence motif" description="Nuclear localization signal 1" evidence="2">
    <location>
        <begin position="12"/>
        <end position="15"/>
    </location>
</feature>
<feature type="short sequence motif" description="Nuclear localization signal 2" evidence="2">
    <location>
        <begin position="36"/>
        <end position="41"/>
    </location>
</feature>
<feature type="short sequence motif" description="Nuclear export signal" evidence="2">
    <location>
        <begin position="63"/>
        <end position="71"/>
    </location>
</feature>
<feature type="compositionally biased region" description="Polar residues" evidence="5">
    <location>
        <begin position="440"/>
        <end position="451"/>
    </location>
</feature>
<feature type="splice variant" id="VSP_002091" description="In isoform 2." evidence="10">
    <location>
        <begin position="142"/>
        <end position="376"/>
    </location>
</feature>
<feature type="sequence variant" description="In strain: Han/Wistar, Han/Wistar-dv, Han/Wistar-siv and Han/Wistar-liv." evidence="9">
    <original>V</original>
    <variation>A</variation>
    <location>
        <position position="497"/>
    </location>
</feature>
<feature type="sequence variant" description="In strain: Han/Wistar-dv.">
    <location>
        <begin position="766"/>
        <end position="808"/>
    </location>
</feature>
<feature type="sequence variant" description="In strain: Han/Wistar-siv and Han/Wistar-liv.">
    <original>FQSPSILNEAYSADLSSIGHLQTAAHLPRLAEAQPLPDITPSGFL</original>
    <variation>IRAFYRE</variation>
    <location>
        <begin position="809"/>
        <end position="853"/>
    </location>
</feature>
<feature type="sequence conflict" description="In Ref. 1; AAA56897." evidence="11" ref="1">
    <original>S</original>
    <variation>T</variation>
    <location>
        <position position="74"/>
    </location>
</feature>
<feature type="sequence conflict" description="In Ref. 1; AAA56897." evidence="11" ref="1">
    <original>A</original>
    <variation>V</variation>
    <location>
        <position position="659"/>
    </location>
</feature>
<feature type="sequence conflict" description="In Ref. 1; AAA56897." evidence="11" ref="1">
    <original>YSLF</original>
    <variation>ICLL</variation>
    <location>
        <begin position="679"/>
        <end position="682"/>
    </location>
</feature>
<feature type="sequence conflict" description="In Ref. 1; AAA56897." evidence="11" ref="1">
    <original>A</original>
    <variation>V</variation>
    <location>
        <position position="739"/>
    </location>
</feature>
<feature type="sequence conflict" description="In Ref. 1; AAA56897." evidence="11" ref="1">
    <original>D</original>
    <variation>E</variation>
    <location>
        <position position="744"/>
    </location>
</feature>
<feature type="sequence conflict" description="In Ref. 1; AAA56897." evidence="11" ref="1">
    <original>A</original>
    <variation>G</variation>
    <location>
        <position position="770"/>
    </location>
</feature>
<feature type="sequence conflict" description="In Ref. 1; AAA56897." evidence="11" ref="1">
    <original>H</original>
    <variation>D</variation>
    <location>
        <position position="787"/>
    </location>
</feature>
<feature type="sequence conflict" description="In Ref. 2; AAA19451." evidence="11" ref="2">
    <original>Q</original>
    <variation>H</variation>
    <location>
        <position position="794"/>
    </location>
</feature>
<dbReference type="EMBL" id="U09000">
    <property type="protein sequence ID" value="AAA56897.1"/>
    <property type="molecule type" value="mRNA"/>
</dbReference>
<dbReference type="EMBL" id="U04860">
    <property type="protein sequence ID" value="AAA19451.1"/>
    <property type="molecule type" value="mRNA"/>
</dbReference>
<dbReference type="EMBL" id="AF082124">
    <property type="protein sequence ID" value="AAC35168.1"/>
    <property type="molecule type" value="mRNA"/>
</dbReference>
<dbReference type="EMBL" id="AF082125">
    <property type="protein sequence ID" value="AAC35169.1"/>
    <property type="molecule type" value="mRNA"/>
</dbReference>
<dbReference type="EMBL" id="AF082126">
    <property type="protein sequence ID" value="AAC35170.1"/>
    <property type="molecule type" value="mRNA"/>
</dbReference>
<dbReference type="PIR" id="S58375">
    <property type="entry name" value="S58375"/>
</dbReference>
<dbReference type="SMR" id="P41738"/>
<dbReference type="BioGRID" id="247719">
    <property type="interactions" value="4"/>
</dbReference>
<dbReference type="FunCoup" id="P41738">
    <property type="interactions" value="258"/>
</dbReference>
<dbReference type="IntAct" id="P41738">
    <property type="interactions" value="2"/>
</dbReference>
<dbReference type="STRING" id="10116.ENSRNOP00000006618"/>
<dbReference type="BindingDB" id="P41738"/>
<dbReference type="ChEMBL" id="CHEMBL5400"/>
<dbReference type="GlyGen" id="P41738">
    <property type="glycosylation" value="1 site"/>
</dbReference>
<dbReference type="iPTMnet" id="P41738"/>
<dbReference type="PhosphoSitePlus" id="P41738"/>
<dbReference type="PaxDb" id="10116-ENSRNOP00000006618"/>
<dbReference type="UCSC" id="RGD:2074">
    <molecule id="P41738-1"/>
    <property type="organism name" value="rat"/>
</dbReference>
<dbReference type="AGR" id="RGD:2074"/>
<dbReference type="RGD" id="2074">
    <property type="gene designation" value="Ahr"/>
</dbReference>
<dbReference type="eggNOG" id="KOG3560">
    <property type="taxonomic scope" value="Eukaryota"/>
</dbReference>
<dbReference type="InParanoid" id="P41738"/>
<dbReference type="OrthoDB" id="6099906at2759"/>
<dbReference type="PhylomeDB" id="P41738"/>
<dbReference type="Reactome" id="R-RNO-211945">
    <property type="pathway name" value="Phase I - Functionalization of compounds"/>
</dbReference>
<dbReference type="Reactome" id="R-RNO-211976">
    <property type="pathway name" value="Endogenous sterols"/>
</dbReference>
<dbReference type="Reactome" id="R-RNO-211981">
    <property type="pathway name" value="Xenobiotics"/>
</dbReference>
<dbReference type="Reactome" id="R-RNO-8937144">
    <property type="pathway name" value="Aryl hydrocarbon receptor signalling"/>
</dbReference>
<dbReference type="PRO" id="PR:P41738"/>
<dbReference type="Proteomes" id="UP000002494">
    <property type="component" value="Unplaced"/>
</dbReference>
<dbReference type="GO" id="GO:0034751">
    <property type="term" value="C:aryl hydrocarbon receptor complex"/>
    <property type="evidence" value="ECO:0000318"/>
    <property type="project" value="GO_Central"/>
</dbReference>
<dbReference type="GO" id="GO:0005737">
    <property type="term" value="C:cytoplasm"/>
    <property type="evidence" value="ECO:0000314"/>
    <property type="project" value="RGD"/>
</dbReference>
<dbReference type="GO" id="GO:0005829">
    <property type="term" value="C:cytosol"/>
    <property type="evidence" value="ECO:0000266"/>
    <property type="project" value="RGD"/>
</dbReference>
<dbReference type="GO" id="GO:0034753">
    <property type="term" value="C:nuclear aryl hydrocarbon receptor complex"/>
    <property type="evidence" value="ECO:0000250"/>
    <property type="project" value="UniProtKB"/>
</dbReference>
<dbReference type="GO" id="GO:0005634">
    <property type="term" value="C:nucleus"/>
    <property type="evidence" value="ECO:0000314"/>
    <property type="project" value="UniProtKB"/>
</dbReference>
<dbReference type="GO" id="GO:0032991">
    <property type="term" value="C:protein-containing complex"/>
    <property type="evidence" value="ECO:0000266"/>
    <property type="project" value="RGD"/>
</dbReference>
<dbReference type="GO" id="GO:0052869">
    <property type="term" value="F:arachidonate omega-hydroxylase activity"/>
    <property type="evidence" value="ECO:0000315"/>
    <property type="project" value="RGD"/>
</dbReference>
<dbReference type="GO" id="GO:0017162">
    <property type="term" value="F:aryl hydrocarbon receptor binding"/>
    <property type="evidence" value="ECO:0000266"/>
    <property type="project" value="RGD"/>
</dbReference>
<dbReference type="GO" id="GO:0000987">
    <property type="term" value="F:cis-regulatory region sequence-specific DNA binding"/>
    <property type="evidence" value="ECO:0000266"/>
    <property type="project" value="RGD"/>
</dbReference>
<dbReference type="GO" id="GO:0003677">
    <property type="term" value="F:DNA binding"/>
    <property type="evidence" value="ECO:0000266"/>
    <property type="project" value="RGD"/>
</dbReference>
<dbReference type="GO" id="GO:0003700">
    <property type="term" value="F:DNA-binding transcription factor activity"/>
    <property type="evidence" value="ECO:0000266"/>
    <property type="project" value="RGD"/>
</dbReference>
<dbReference type="GO" id="GO:0000981">
    <property type="term" value="F:DNA-binding transcription factor activity, RNA polymerase II-specific"/>
    <property type="evidence" value="ECO:0000266"/>
    <property type="project" value="RGD"/>
</dbReference>
<dbReference type="GO" id="GO:0070888">
    <property type="term" value="F:E-box binding"/>
    <property type="evidence" value="ECO:0000250"/>
    <property type="project" value="UniProtKB"/>
</dbReference>
<dbReference type="GO" id="GO:0051879">
    <property type="term" value="F:Hsp90 protein binding"/>
    <property type="evidence" value="ECO:0000266"/>
    <property type="project" value="RGD"/>
</dbReference>
<dbReference type="GO" id="GO:0042802">
    <property type="term" value="F:identical protein binding"/>
    <property type="evidence" value="ECO:0000266"/>
    <property type="project" value="RGD"/>
</dbReference>
<dbReference type="GO" id="GO:0004879">
    <property type="term" value="F:nuclear receptor activity"/>
    <property type="evidence" value="ECO:0000314"/>
    <property type="project" value="UniProtKB"/>
</dbReference>
<dbReference type="GO" id="GO:0046982">
    <property type="term" value="F:protein heterodimerization activity"/>
    <property type="evidence" value="ECO:0000250"/>
    <property type="project" value="UniProtKB"/>
</dbReference>
<dbReference type="GO" id="GO:0042803">
    <property type="term" value="F:protein homodimerization activity"/>
    <property type="evidence" value="ECO:0000250"/>
    <property type="project" value="UniProtKB"/>
</dbReference>
<dbReference type="GO" id="GO:0051087">
    <property type="term" value="F:protein-folding chaperone binding"/>
    <property type="evidence" value="ECO:0000266"/>
    <property type="project" value="RGD"/>
</dbReference>
<dbReference type="GO" id="GO:0061629">
    <property type="term" value="F:RNA polymerase II-specific DNA-binding transcription factor binding"/>
    <property type="evidence" value="ECO:0000266"/>
    <property type="project" value="RGD"/>
</dbReference>
<dbReference type="GO" id="GO:0043565">
    <property type="term" value="F:sequence-specific DNA binding"/>
    <property type="evidence" value="ECO:0000266"/>
    <property type="project" value="RGD"/>
</dbReference>
<dbReference type="GO" id="GO:1990837">
    <property type="term" value="F:sequence-specific double-stranded DNA binding"/>
    <property type="evidence" value="ECO:0000314"/>
    <property type="project" value="RGD"/>
</dbReference>
<dbReference type="GO" id="GO:0017025">
    <property type="term" value="F:TBP-class protein binding"/>
    <property type="evidence" value="ECO:0000266"/>
    <property type="project" value="RGD"/>
</dbReference>
<dbReference type="GO" id="GO:0001094">
    <property type="term" value="F:TFIID-class transcription factor complex binding"/>
    <property type="evidence" value="ECO:0000266"/>
    <property type="project" value="RGD"/>
</dbReference>
<dbReference type="GO" id="GO:0015643">
    <property type="term" value="F:toxic substance binding"/>
    <property type="evidence" value="ECO:0000314"/>
    <property type="project" value="RGD"/>
</dbReference>
<dbReference type="GO" id="GO:0000976">
    <property type="term" value="F:transcription cis-regulatory region binding"/>
    <property type="evidence" value="ECO:0000266"/>
    <property type="project" value="RGD"/>
</dbReference>
<dbReference type="GO" id="GO:0001223">
    <property type="term" value="F:transcription coactivator binding"/>
    <property type="evidence" value="ECO:0000266"/>
    <property type="project" value="RGD"/>
</dbReference>
<dbReference type="GO" id="GO:0046222">
    <property type="term" value="P:aflatoxin metabolic process"/>
    <property type="evidence" value="ECO:0000270"/>
    <property type="project" value="RGD"/>
</dbReference>
<dbReference type="GO" id="GO:0006915">
    <property type="term" value="P:apoptotic process"/>
    <property type="evidence" value="ECO:0000304"/>
    <property type="project" value="UniProtKB"/>
</dbReference>
<dbReference type="GO" id="GO:0001782">
    <property type="term" value="P:B cell homeostasis"/>
    <property type="evidence" value="ECO:0000266"/>
    <property type="project" value="RGD"/>
</dbReference>
<dbReference type="GO" id="GO:0008015">
    <property type="term" value="P:blood circulation"/>
    <property type="evidence" value="ECO:0000266"/>
    <property type="project" value="RGD"/>
</dbReference>
<dbReference type="GO" id="GO:0001568">
    <property type="term" value="P:blood vessel development"/>
    <property type="evidence" value="ECO:0000266"/>
    <property type="project" value="RGD"/>
</dbReference>
<dbReference type="GO" id="GO:0048514">
    <property type="term" value="P:blood vessel morphogenesis"/>
    <property type="evidence" value="ECO:0000266"/>
    <property type="project" value="RGD"/>
</dbReference>
<dbReference type="GO" id="GO:0001974">
    <property type="term" value="P:blood vessel remodeling"/>
    <property type="evidence" value="ECO:0000266"/>
    <property type="project" value="RGD"/>
</dbReference>
<dbReference type="GO" id="GO:0001569">
    <property type="term" value="P:branching involved in blood vessel morphogenesis"/>
    <property type="evidence" value="ECO:0000266"/>
    <property type="project" value="RGD"/>
</dbReference>
<dbReference type="GO" id="GO:0043010">
    <property type="term" value="P:camera-type eye development"/>
    <property type="evidence" value="ECO:0000266"/>
    <property type="project" value="RGD"/>
</dbReference>
<dbReference type="GO" id="GO:0003214">
    <property type="term" value="P:cardiac left ventricle morphogenesis"/>
    <property type="evidence" value="ECO:0000266"/>
    <property type="project" value="RGD"/>
</dbReference>
<dbReference type="GO" id="GO:0000902">
    <property type="term" value="P:cell morphogenesis"/>
    <property type="evidence" value="ECO:0000266"/>
    <property type="project" value="RGD"/>
</dbReference>
<dbReference type="GO" id="GO:1904613">
    <property type="term" value="P:cellular response to 2,3,7,8-tetrachlorodibenzodioxine"/>
    <property type="evidence" value="ECO:0000314"/>
    <property type="project" value="UniProtKB"/>
</dbReference>
<dbReference type="GO" id="GO:1904682">
    <property type="term" value="P:cellular response to 3-methylcholanthrene"/>
    <property type="evidence" value="ECO:0000266"/>
    <property type="project" value="RGD"/>
</dbReference>
<dbReference type="GO" id="GO:0071320">
    <property type="term" value="P:cellular response to cAMP"/>
    <property type="evidence" value="ECO:0000266"/>
    <property type="project" value="RGD"/>
</dbReference>
<dbReference type="GO" id="GO:0071549">
    <property type="term" value="P:cellular response to dexamethasone stimulus"/>
    <property type="evidence" value="ECO:0000270"/>
    <property type="project" value="RGD"/>
</dbReference>
<dbReference type="GO" id="GO:1904322">
    <property type="term" value="P:cellular response to forskolin"/>
    <property type="evidence" value="ECO:0000266"/>
    <property type="project" value="RGD"/>
</dbReference>
<dbReference type="GO" id="GO:0071385">
    <property type="term" value="P:cellular response to glucocorticoid stimulus"/>
    <property type="evidence" value="ECO:0000270"/>
    <property type="project" value="RGD"/>
</dbReference>
<dbReference type="GO" id="GO:0071219">
    <property type="term" value="P:cellular response to molecule of bacterial origin"/>
    <property type="evidence" value="ECO:0000266"/>
    <property type="project" value="RGD"/>
</dbReference>
<dbReference type="GO" id="GO:0097237">
    <property type="term" value="P:cellular response to toxic substance"/>
    <property type="evidence" value="ECO:0000315"/>
    <property type="project" value="RGD"/>
</dbReference>
<dbReference type="GO" id="GO:0032922">
    <property type="term" value="P:circadian regulation of gene expression"/>
    <property type="evidence" value="ECO:0000250"/>
    <property type="project" value="UniProtKB"/>
</dbReference>
<dbReference type="GO" id="GO:0007623">
    <property type="term" value="P:circadian rhythm"/>
    <property type="evidence" value="ECO:0000270"/>
    <property type="project" value="RGD"/>
</dbReference>
<dbReference type="GO" id="GO:0003243">
    <property type="term" value="P:circumferential growth involved in left ventricle morphogenesis"/>
    <property type="evidence" value="ECO:0000266"/>
    <property type="project" value="RGD"/>
</dbReference>
<dbReference type="GO" id="GO:0001661">
    <property type="term" value="P:conditioned taste aversion"/>
    <property type="evidence" value="ECO:0000315"/>
    <property type="project" value="RGD"/>
</dbReference>
<dbReference type="GO" id="GO:0060242">
    <property type="term" value="P:contact inhibition"/>
    <property type="evidence" value="ECO:0000315"/>
    <property type="project" value="RGD"/>
</dbReference>
<dbReference type="GO" id="GO:0030520">
    <property type="term" value="P:estrogen receptor signaling pathway"/>
    <property type="evidence" value="ECO:0000314"/>
    <property type="project" value="RGD"/>
</dbReference>
<dbReference type="GO" id="GO:0007565">
    <property type="term" value="P:female pregnancy"/>
    <property type="evidence" value="ECO:0000270"/>
    <property type="project" value="RGD"/>
</dbReference>
<dbReference type="GO" id="GO:0048732">
    <property type="term" value="P:gland development"/>
    <property type="evidence" value="ECO:0000266"/>
    <property type="project" value="RGD"/>
</dbReference>
<dbReference type="GO" id="GO:0072102">
    <property type="term" value="P:glomerulus morphogenesis"/>
    <property type="evidence" value="ECO:0000266"/>
    <property type="project" value="RGD"/>
</dbReference>
<dbReference type="GO" id="GO:0002376">
    <property type="term" value="P:immune system process"/>
    <property type="evidence" value="ECO:0000266"/>
    <property type="project" value="RGD"/>
</dbReference>
<dbReference type="GO" id="GO:0060993">
    <property type="term" value="P:kidney morphogenesis"/>
    <property type="evidence" value="ECO:0000266"/>
    <property type="project" value="RGD"/>
</dbReference>
<dbReference type="GO" id="GO:0001889">
    <property type="term" value="P:liver development"/>
    <property type="evidence" value="ECO:0000266"/>
    <property type="project" value="RGD"/>
</dbReference>
<dbReference type="GO" id="GO:0002260">
    <property type="term" value="P:lymphocyte homeostasis"/>
    <property type="evidence" value="ECO:0000266"/>
    <property type="project" value="RGD"/>
</dbReference>
<dbReference type="GO" id="GO:0060763">
    <property type="term" value="P:mammary duct terminal end bud growth"/>
    <property type="evidence" value="ECO:0000314"/>
    <property type="project" value="RGD"/>
</dbReference>
<dbReference type="GO" id="GO:1903170">
    <property type="term" value="P:negative regulation of calcium ion transmembrane transport"/>
    <property type="evidence" value="ECO:0000314"/>
    <property type="project" value="RGD"/>
</dbReference>
<dbReference type="GO" id="GO:2000279">
    <property type="term" value="P:negative regulation of DNA biosynthetic process"/>
    <property type="evidence" value="ECO:0000314"/>
    <property type="project" value="RGD"/>
</dbReference>
<dbReference type="GO" id="GO:0045892">
    <property type="term" value="P:negative regulation of DNA-templated transcription"/>
    <property type="evidence" value="ECO:0000250"/>
    <property type="project" value="UniProtKB"/>
</dbReference>
<dbReference type="GO" id="GO:0050680">
    <property type="term" value="P:negative regulation of epithelial cell proliferation"/>
    <property type="evidence" value="ECO:0000315"/>
    <property type="project" value="RGD"/>
</dbReference>
<dbReference type="GO" id="GO:0050728">
    <property type="term" value="P:negative regulation of inflammatory response"/>
    <property type="evidence" value="ECO:0000266"/>
    <property type="project" value="RGD"/>
</dbReference>
<dbReference type="GO" id="GO:0045668">
    <property type="term" value="P:negative regulation of osteoblast differentiation"/>
    <property type="evidence" value="ECO:0000314"/>
    <property type="project" value="RGD"/>
</dbReference>
<dbReference type="GO" id="GO:0033689">
    <property type="term" value="P:negative regulation of osteoblast proliferation"/>
    <property type="evidence" value="ECO:0000314"/>
    <property type="project" value="RGD"/>
</dbReference>
<dbReference type="GO" id="GO:0003085">
    <property type="term" value="P:negative regulation of systemic arterial blood pressure"/>
    <property type="evidence" value="ECO:0000266"/>
    <property type="project" value="RGD"/>
</dbReference>
<dbReference type="GO" id="GO:0002841">
    <property type="term" value="P:negative regulation of T cell mediated immune response to tumor cell"/>
    <property type="evidence" value="ECO:0000250"/>
    <property type="project" value="UniProtKB"/>
</dbReference>
<dbReference type="GO" id="GO:0000122">
    <property type="term" value="P:negative regulation of transcription by RNA polymerase II"/>
    <property type="evidence" value="ECO:0000266"/>
    <property type="project" value="RGD"/>
</dbReference>
<dbReference type="GO" id="GO:0045906">
    <property type="term" value="P:negative regulation of vasoconstriction"/>
    <property type="evidence" value="ECO:0000266"/>
    <property type="project" value="RGD"/>
</dbReference>
<dbReference type="GO" id="GO:0046209">
    <property type="term" value="P:nitric oxide metabolic process"/>
    <property type="evidence" value="ECO:0000270"/>
    <property type="project" value="RGD"/>
</dbReference>
<dbReference type="GO" id="GO:0097267">
    <property type="term" value="P:omega-hydroxylase P450 pathway"/>
    <property type="evidence" value="ECO:0000315"/>
    <property type="project" value="RGD"/>
</dbReference>
<dbReference type="GO" id="GO:0001541">
    <property type="term" value="P:ovarian follicle development"/>
    <property type="evidence" value="ECO:0000315"/>
    <property type="project" value="RGD"/>
</dbReference>
<dbReference type="GO" id="GO:0043065">
    <property type="term" value="P:positive regulation of apoptotic process"/>
    <property type="evidence" value="ECO:0000315"/>
    <property type="project" value="RGD"/>
</dbReference>
<dbReference type="GO" id="GO:0045793">
    <property type="term" value="P:positive regulation of cell size"/>
    <property type="evidence" value="ECO:0000266"/>
    <property type="project" value="RGD"/>
</dbReference>
<dbReference type="GO" id="GO:0045893">
    <property type="term" value="P:positive regulation of DNA-templated transcription"/>
    <property type="evidence" value="ECO:0000250"/>
    <property type="project" value="UniProtKB"/>
</dbReference>
<dbReference type="GO" id="GO:0040010">
    <property type="term" value="P:positive regulation of growth rate"/>
    <property type="evidence" value="ECO:0000266"/>
    <property type="project" value="RGD"/>
</dbReference>
<dbReference type="GO" id="GO:0045895">
    <property type="term" value="P:positive regulation of mating-type specific transcription, DNA-templated"/>
    <property type="evidence" value="ECO:0000314"/>
    <property type="project" value="RGD"/>
</dbReference>
<dbReference type="GO" id="GO:0045899">
    <property type="term" value="P:positive regulation of RNA polymerase II transcription preinitiation complex assembly"/>
    <property type="evidence" value="ECO:0000266"/>
    <property type="project" value="RGD"/>
</dbReference>
<dbReference type="GO" id="GO:0045944">
    <property type="term" value="P:positive regulation of transcription by RNA polymerase II"/>
    <property type="evidence" value="ECO:0000250"/>
    <property type="project" value="UniProtKB"/>
</dbReference>
<dbReference type="GO" id="GO:0035166">
    <property type="term" value="P:post-embryonic hemopoiesis"/>
    <property type="evidence" value="ECO:0000266"/>
    <property type="project" value="RGD"/>
</dbReference>
<dbReference type="GO" id="GO:0030850">
    <property type="term" value="P:prostate gland development"/>
    <property type="evidence" value="ECO:0000266"/>
    <property type="project" value="RGD"/>
</dbReference>
<dbReference type="GO" id="GO:0034504">
    <property type="term" value="P:protein localization to nucleus"/>
    <property type="evidence" value="ECO:0000315"/>
    <property type="project" value="RGD"/>
</dbReference>
<dbReference type="GO" id="GO:1903409">
    <property type="term" value="P:reactive oxygen species biosynthetic process"/>
    <property type="evidence" value="ECO:0000315"/>
    <property type="project" value="RGD"/>
</dbReference>
<dbReference type="GO" id="GO:0002819">
    <property type="term" value="P:regulation of adaptive immune response"/>
    <property type="evidence" value="ECO:0000250"/>
    <property type="project" value="UniProtKB"/>
</dbReference>
<dbReference type="GO" id="GO:0030888">
    <property type="term" value="P:regulation of B cell proliferation"/>
    <property type="evidence" value="ECO:0000266"/>
    <property type="project" value="RGD"/>
</dbReference>
<dbReference type="GO" id="GO:0051726">
    <property type="term" value="P:regulation of cell cycle"/>
    <property type="evidence" value="ECO:0000304"/>
    <property type="project" value="UniProtKB"/>
</dbReference>
<dbReference type="GO" id="GO:0001817">
    <property type="term" value="P:regulation of cytokine production"/>
    <property type="evidence" value="ECO:0000315"/>
    <property type="project" value="RGD"/>
</dbReference>
<dbReference type="GO" id="GO:0006355">
    <property type="term" value="P:regulation of DNA-templated transcription"/>
    <property type="evidence" value="ECO:0000314"/>
    <property type="project" value="UniProtKB"/>
</dbReference>
<dbReference type="GO" id="GO:1903998">
    <property type="term" value="P:regulation of eating behavior"/>
    <property type="evidence" value="ECO:0000314"/>
    <property type="project" value="RGD"/>
</dbReference>
<dbReference type="GO" id="GO:0010468">
    <property type="term" value="P:regulation of gene expression"/>
    <property type="evidence" value="ECO:0000266"/>
    <property type="project" value="RGD"/>
</dbReference>
<dbReference type="GO" id="GO:0006357">
    <property type="term" value="P:regulation of transcription by RNA polymerase II"/>
    <property type="evidence" value="ECO:0000266"/>
    <property type="project" value="RGD"/>
</dbReference>
<dbReference type="GO" id="GO:0048608">
    <property type="term" value="P:reproductive structure development"/>
    <property type="evidence" value="ECO:0000266"/>
    <property type="project" value="RGD"/>
</dbReference>
<dbReference type="GO" id="GO:0046685">
    <property type="term" value="P:response to arsenic-containing substance"/>
    <property type="evidence" value="ECO:0000270"/>
    <property type="project" value="RGD"/>
</dbReference>
<dbReference type="GO" id="GO:0032355">
    <property type="term" value="P:response to estradiol"/>
    <property type="evidence" value="ECO:0000270"/>
    <property type="project" value="RGD"/>
</dbReference>
<dbReference type="GO" id="GO:0009636">
    <property type="term" value="P:response to toxic substance"/>
    <property type="evidence" value="ECO:0000270"/>
    <property type="project" value="RGD"/>
</dbReference>
<dbReference type="GO" id="GO:0009410">
    <property type="term" value="P:response to xenobiotic stimulus"/>
    <property type="evidence" value="ECO:0000314"/>
    <property type="project" value="UniProtKB"/>
</dbReference>
<dbReference type="GO" id="GO:0048536">
    <property type="term" value="P:spleen development"/>
    <property type="evidence" value="ECO:0000266"/>
    <property type="project" value="RGD"/>
</dbReference>
<dbReference type="GO" id="GO:0043029">
    <property type="term" value="P:T cell homeostasis"/>
    <property type="evidence" value="ECO:0000266"/>
    <property type="project" value="RGD"/>
</dbReference>
<dbReference type="GO" id="GO:0048771">
    <property type="term" value="P:tissue remodeling"/>
    <property type="evidence" value="ECO:0000270"/>
    <property type="project" value="RGD"/>
</dbReference>
<dbReference type="GO" id="GO:0006366">
    <property type="term" value="P:transcription by RNA polymerase II"/>
    <property type="evidence" value="ECO:0000314"/>
    <property type="project" value="UniProtKB"/>
</dbReference>
<dbReference type="GO" id="GO:0001944">
    <property type="term" value="P:vasculature development"/>
    <property type="evidence" value="ECO:0000266"/>
    <property type="project" value="RGD"/>
</dbReference>
<dbReference type="GO" id="GO:0006805">
    <property type="term" value="P:xenobiotic metabolic process"/>
    <property type="evidence" value="ECO:0007669"/>
    <property type="project" value="InterPro"/>
</dbReference>
<dbReference type="CDD" id="cd11436">
    <property type="entry name" value="bHLH-PAS_AhR"/>
    <property type="match status" value="1"/>
</dbReference>
<dbReference type="CDD" id="cd00130">
    <property type="entry name" value="PAS"/>
    <property type="match status" value="2"/>
</dbReference>
<dbReference type="FunFam" id="3.30.450.20:FF:000035">
    <property type="entry name" value="Aryl hydrocarbon receptor"/>
    <property type="match status" value="1"/>
</dbReference>
<dbReference type="FunFam" id="3.30.450.20:FF:000019">
    <property type="entry name" value="Aryl hydrocarbon receptor 1"/>
    <property type="match status" value="1"/>
</dbReference>
<dbReference type="FunFam" id="4.10.280.10:FF:000024">
    <property type="entry name" value="Aryl hydrocarbon receptor 2"/>
    <property type="match status" value="1"/>
</dbReference>
<dbReference type="Gene3D" id="4.10.280.10">
    <property type="entry name" value="Helix-loop-helix DNA-binding domain"/>
    <property type="match status" value="1"/>
</dbReference>
<dbReference type="Gene3D" id="3.30.450.20">
    <property type="entry name" value="PAS domain"/>
    <property type="match status" value="2"/>
</dbReference>
<dbReference type="InterPro" id="IPR039091">
    <property type="entry name" value="AHR/AHRR"/>
</dbReference>
<dbReference type="InterPro" id="IPR033348">
    <property type="entry name" value="AHR_bHLH"/>
</dbReference>
<dbReference type="InterPro" id="IPR011598">
    <property type="entry name" value="bHLH_dom"/>
</dbReference>
<dbReference type="InterPro" id="IPR036638">
    <property type="entry name" value="HLH_DNA-bd_sf"/>
</dbReference>
<dbReference type="InterPro" id="IPR001610">
    <property type="entry name" value="PAC"/>
</dbReference>
<dbReference type="InterPro" id="IPR000014">
    <property type="entry name" value="PAS"/>
</dbReference>
<dbReference type="InterPro" id="IPR035965">
    <property type="entry name" value="PAS-like_dom_sf"/>
</dbReference>
<dbReference type="InterPro" id="IPR013767">
    <property type="entry name" value="PAS_fold"/>
</dbReference>
<dbReference type="InterPro" id="IPR013655">
    <property type="entry name" value="PAS_fold_3"/>
</dbReference>
<dbReference type="PANTHER" id="PTHR10649">
    <property type="entry name" value="ARYL HYDROCARBON RECEPTOR"/>
    <property type="match status" value="1"/>
</dbReference>
<dbReference type="PANTHER" id="PTHR10649:SF9">
    <property type="entry name" value="ARYL HYDROCARBON RECEPTOR"/>
    <property type="match status" value="1"/>
</dbReference>
<dbReference type="Pfam" id="PF00010">
    <property type="entry name" value="HLH"/>
    <property type="match status" value="1"/>
</dbReference>
<dbReference type="Pfam" id="PF00989">
    <property type="entry name" value="PAS"/>
    <property type="match status" value="1"/>
</dbReference>
<dbReference type="Pfam" id="PF08447">
    <property type="entry name" value="PAS_3"/>
    <property type="match status" value="1"/>
</dbReference>
<dbReference type="SMART" id="SM00353">
    <property type="entry name" value="HLH"/>
    <property type="match status" value="1"/>
</dbReference>
<dbReference type="SMART" id="SM00086">
    <property type="entry name" value="PAC"/>
    <property type="match status" value="1"/>
</dbReference>
<dbReference type="SMART" id="SM00091">
    <property type="entry name" value="PAS"/>
    <property type="match status" value="2"/>
</dbReference>
<dbReference type="SUPFAM" id="SSF47459">
    <property type="entry name" value="HLH, helix-loop-helix DNA-binding domain"/>
    <property type="match status" value="1"/>
</dbReference>
<dbReference type="SUPFAM" id="SSF55785">
    <property type="entry name" value="PYP-like sensor domain (PAS domain)"/>
    <property type="match status" value="2"/>
</dbReference>
<dbReference type="PROSITE" id="PS50888">
    <property type="entry name" value="BHLH"/>
    <property type="match status" value="1"/>
</dbReference>
<dbReference type="PROSITE" id="PS50112">
    <property type="entry name" value="PAS"/>
    <property type="match status" value="1"/>
</dbReference>